<evidence type="ECO:0000256" key="1">
    <source>
        <dbReference type="SAM" id="MobiDB-lite"/>
    </source>
</evidence>
<evidence type="ECO:0000305" key="2"/>
<evidence type="ECO:0000312" key="3">
    <source>
        <dbReference type="WormBase" id="C05C10.2a"/>
    </source>
</evidence>
<name>YQ12_CAEEL</name>
<reference key="1">
    <citation type="journal article" date="1998" name="Science">
        <title>Genome sequence of the nematode C. elegans: a platform for investigating biology.</title>
        <authorList>
            <consortium name="The C. elegans sequencing consortium"/>
        </authorList>
    </citation>
    <scope>NUCLEOTIDE SEQUENCE [LARGE SCALE GENOMIC DNA]</scope>
    <source>
        <strain>Bristol N2</strain>
    </source>
</reference>
<protein>
    <recommendedName>
        <fullName>Uncharacterized ATP-dependent helicase C05C10.2</fullName>
        <ecNumber>3.6.4.-</ecNumber>
    </recommendedName>
</protein>
<organism>
    <name type="scientific">Caenorhabditis elegans</name>
    <dbReference type="NCBI Taxonomy" id="6239"/>
    <lineage>
        <taxon>Eukaryota</taxon>
        <taxon>Metazoa</taxon>
        <taxon>Ecdysozoa</taxon>
        <taxon>Nematoda</taxon>
        <taxon>Chromadorea</taxon>
        <taxon>Rhabditida</taxon>
        <taxon>Rhabditina</taxon>
        <taxon>Rhabditomorpha</taxon>
        <taxon>Rhabditoidea</taxon>
        <taxon>Rhabditidae</taxon>
        <taxon>Peloderinae</taxon>
        <taxon>Caenorhabditis</taxon>
    </lineage>
</organism>
<dbReference type="EC" id="3.6.4.-"/>
<dbReference type="EMBL" id="BX284602">
    <property type="protein sequence ID" value="CAA88201.2"/>
    <property type="molecule type" value="Genomic_DNA"/>
</dbReference>
<dbReference type="PIR" id="T18941">
    <property type="entry name" value="T18941"/>
</dbReference>
<dbReference type="RefSeq" id="NP_001364579.1">
    <property type="nucleotide sequence ID" value="NM_001377846.1"/>
</dbReference>
<dbReference type="RefSeq" id="NP_496142.1">
    <property type="nucleotide sequence ID" value="NM_063741.4"/>
</dbReference>
<dbReference type="SMR" id="Q09449"/>
<dbReference type="BioGRID" id="39868">
    <property type="interactions" value="2"/>
</dbReference>
<dbReference type="FunCoup" id="Q09449">
    <property type="interactions" value="233"/>
</dbReference>
<dbReference type="IntAct" id="Q09449">
    <property type="interactions" value="1"/>
</dbReference>
<dbReference type="STRING" id="6239.C05C10.2b.1"/>
<dbReference type="PaxDb" id="6239-C05C10.2b.1"/>
<dbReference type="PeptideAtlas" id="Q09449"/>
<dbReference type="EnsemblMetazoa" id="C05C10.2a.1">
    <property type="protein sequence ID" value="C05C10.2a.1"/>
    <property type="gene ID" value="WBGene00007329"/>
</dbReference>
<dbReference type="GeneID" id="174546"/>
<dbReference type="UCSC" id="C05C10.2a">
    <property type="organism name" value="c. elegans"/>
</dbReference>
<dbReference type="AGR" id="WB:WBGene00007329"/>
<dbReference type="WormBase" id="C05C10.2a">
    <property type="protein sequence ID" value="CE53934"/>
    <property type="gene ID" value="WBGene00007329"/>
</dbReference>
<dbReference type="eggNOG" id="KOG1801">
    <property type="taxonomic scope" value="Eukaryota"/>
</dbReference>
<dbReference type="InParanoid" id="Q09449"/>
<dbReference type="PRO" id="PR:Q09449"/>
<dbReference type="Proteomes" id="UP000001940">
    <property type="component" value="Chromosome II"/>
</dbReference>
<dbReference type="Bgee" id="WBGene00007329">
    <property type="expression patterns" value="Expressed in germ line (C elegans) and 4 other cell types or tissues"/>
</dbReference>
<dbReference type="ExpressionAtlas" id="Q09449">
    <property type="expression patterns" value="baseline and differential"/>
</dbReference>
<dbReference type="GO" id="GO:0016604">
    <property type="term" value="C:nuclear body"/>
    <property type="evidence" value="ECO:0000318"/>
    <property type="project" value="GO_Central"/>
</dbReference>
<dbReference type="GO" id="GO:0005524">
    <property type="term" value="F:ATP binding"/>
    <property type="evidence" value="ECO:0007669"/>
    <property type="project" value="UniProtKB-KW"/>
</dbReference>
<dbReference type="GO" id="GO:0004386">
    <property type="term" value="F:helicase activity"/>
    <property type="evidence" value="ECO:0007669"/>
    <property type="project" value="UniProtKB-KW"/>
</dbReference>
<dbReference type="GO" id="GO:0016787">
    <property type="term" value="F:hydrolase activity"/>
    <property type="evidence" value="ECO:0007669"/>
    <property type="project" value="UniProtKB-KW"/>
</dbReference>
<dbReference type="GO" id="GO:0003723">
    <property type="term" value="F:RNA binding"/>
    <property type="evidence" value="ECO:0000318"/>
    <property type="project" value="GO_Central"/>
</dbReference>
<dbReference type="GO" id="GO:0001147">
    <property type="term" value="F:transcription termination site sequence-specific DNA binding"/>
    <property type="evidence" value="ECO:0000318"/>
    <property type="project" value="GO_Central"/>
</dbReference>
<dbReference type="GO" id="GO:0006369">
    <property type="term" value="P:termination of RNA polymerase II transcription"/>
    <property type="evidence" value="ECO:0000318"/>
    <property type="project" value="GO_Central"/>
</dbReference>
<dbReference type="CDD" id="cd18808">
    <property type="entry name" value="SF1_C_Upf1"/>
    <property type="match status" value="1"/>
</dbReference>
<dbReference type="FunFam" id="3.40.50.300:FF:002131">
    <property type="entry name" value="Uncharacterized ATP-dependent helicase C05C10.2"/>
    <property type="match status" value="1"/>
</dbReference>
<dbReference type="Gene3D" id="3.40.50.300">
    <property type="entry name" value="P-loop containing nucleotide triphosphate hydrolases"/>
    <property type="match status" value="2"/>
</dbReference>
<dbReference type="InterPro" id="IPR050534">
    <property type="entry name" value="Coronavir_polyprotein_1ab"/>
</dbReference>
<dbReference type="InterPro" id="IPR041679">
    <property type="entry name" value="DNA2/NAM7-like_C"/>
</dbReference>
<dbReference type="InterPro" id="IPR041677">
    <property type="entry name" value="DNA2/NAM7_AAA_11"/>
</dbReference>
<dbReference type="InterPro" id="IPR027417">
    <property type="entry name" value="P-loop_NTPase"/>
</dbReference>
<dbReference type="InterPro" id="IPR047187">
    <property type="entry name" value="SF1_C_Upf1"/>
</dbReference>
<dbReference type="PANTHER" id="PTHR43788">
    <property type="entry name" value="DNA2/NAM7 HELICASE FAMILY MEMBER"/>
    <property type="match status" value="1"/>
</dbReference>
<dbReference type="PANTHER" id="PTHR43788:SF16">
    <property type="entry name" value="HELICASE WITH ZINC FINGER 2"/>
    <property type="match status" value="1"/>
</dbReference>
<dbReference type="Pfam" id="PF13086">
    <property type="entry name" value="AAA_11"/>
    <property type="match status" value="1"/>
</dbReference>
<dbReference type="Pfam" id="PF13087">
    <property type="entry name" value="AAA_12"/>
    <property type="match status" value="1"/>
</dbReference>
<dbReference type="SUPFAM" id="SSF52540">
    <property type="entry name" value="P-loop containing nucleoside triphosphate hydrolases"/>
    <property type="match status" value="1"/>
</dbReference>
<proteinExistence type="inferred from homology"/>
<accession>Q09449</accession>
<keyword id="KW-0067">ATP-binding</keyword>
<keyword id="KW-0347">Helicase</keyword>
<keyword id="KW-0378">Hydrolase</keyword>
<keyword id="KW-0547">Nucleotide-binding</keyword>
<keyword id="KW-1185">Reference proteome</keyword>
<sequence length="1523" mass="172265">MLPTSSNNEENRKPENSFPPTHFDTWERLSDYQKPSSSTTDDAYGKPVAKISPTASIDERETGIIGSTLRQDSTDSDSTGSSNMNPYDRLDKEVISKKNAHTNSYRNDVDELEGSLRTLGLQKVNAPTISSFSAWKSQSSALPAPSSSETSKIVKAEIKAPQQPMSLNPNYFDVMREMEKSMNIFTKLFRGSQIRNKNDLPSGRHLVNYRQNHAFDFAAMSHIWKENKMENLPKLPHRANLVMTLPSSRVRNSKICAFYRVLEKKEDKYILVACHVNIHGFHRGDLRFVEVNNRTVLKGFERSSVIGHLFLGDILTVTELTRCNETVSNVASSVEDASPDAPCQWMASKVVLFPRHEPVNVQFKFTCNGMASVVSTNEPMSVILNNLTEAKTNVEYTGIAFKSASYTVHTEDYTKKWYERIQEEISNIMIYPKALSTIYQYEEYTPNFVVEKQEQEEHPYQQDLEDLDLYRQHEMQTNVFTKFFDIGKSEKRKFGPGKSISNCRHSDAIDFAAMSYIWKNIRQQHLPKLPKLPNMVLPLPTSMPLDSEICAFYRVLVENKSKYILIACHMNVHGYHRGDLRFLEINESTKLYGFEGRSVIGQLFLGDIVAVTELARCNGHGSDAFKIPFDVSMSSQNTCTWMASKITLPSRPPPASVLFSFMKNRMAVVKGCDEPMNVEVKSIQNVEPDLIYKGTAFKPEKPELNFTEGFIKKKRHQIGSITLRIASYPNSFGTIYNFQESDIDNEHYKIGINAFSEEKFTEISLDEREKIVETCSLMGFSAANTIFNGRFDCRAFKMEEIKKNGMTVMFCIENPTSQPTLGLWCAGNRIVIGGPNGDVNGAIETVIDDPDIGYLRIAARLSRDIPKKFSFKGDGEFFVSQREVFENEILDDGYFKTLDPGCNGRRIIETLYGGKPLERVVVDKRDSSIERMMSQLFGVGSGISEHKTSGKKSEDTPTQFYFPSTPEPLALNKYQCEYVQMLLDGNPLIIGSSPFGCGKSMTIITAALELYKLKKNRKQLLITQSNYASVNLIDIAQRVCLSGDDDLKDLKFVRFVSEKNWNELPSNCRTDSDMPYLMNKLFKDWAMGRIDLTNLTCLKTHHYVQMVSHIIKNDLVNPMLFGDHIAQIYDKLSADFSRAPHAQTLVEAFFMIYKPDLVMVTADSAKGLLNILRDVCAVQIDEASQLAECTLLGLLKSFNNASFGLIGDIHQLPPYCEEGLEGKLKDFGIGNTMERAIKEKMFPVCTLRNVYRCHPKTTELLSELFYDGALVSGVSELARSDFMTKRDDFWPNPKFPMMFVNNTGASTKMGTSTSNSSEKSIVGEIVQNLINDPRNPVNPSDIGVISFYSAQTSILTEHLRGSGVKCGTVDAFQGSEKEIIIMCSTNERISDFMQLSNRLNVAMSRAKQVTIIIGHLDGLRRANYWSTIVNKIEQNGNLVNANDWYQNQRRNKVSLSSYPLISTSRQSKQQRANEYNSQHKHVKRQSNNDYGSQRSVTNSLNPEFVGKWDDETYGDWPTIQKST</sequence>
<gene>
    <name evidence="3" type="ORF">C05C10.2</name>
</gene>
<feature type="chain" id="PRO_0000080727" description="Uncharacterized ATP-dependent helicase C05C10.2">
    <location>
        <begin position="1"/>
        <end position="1523"/>
    </location>
</feature>
<feature type="region of interest" description="Disordered" evidence="1">
    <location>
        <begin position="1"/>
        <end position="89"/>
    </location>
</feature>
<feature type="region of interest" description="Disordered" evidence="1">
    <location>
        <begin position="1463"/>
        <end position="1498"/>
    </location>
</feature>
<feature type="compositionally biased region" description="Polar residues" evidence="1">
    <location>
        <begin position="1463"/>
        <end position="1476"/>
    </location>
</feature>
<feature type="compositionally biased region" description="Polar residues" evidence="1">
    <location>
        <begin position="1485"/>
        <end position="1498"/>
    </location>
</feature>
<feature type="binding site" evidence="2">
    <location>
        <begin position="993"/>
        <end position="1000"/>
    </location>
    <ligand>
        <name>ATP</name>
        <dbReference type="ChEBI" id="CHEBI:30616"/>
    </ligand>
</feature>
<comment type="similarity">
    <text evidence="2">Belongs to the DNA2/NAM7 helicase family.</text>
</comment>